<comment type="function">
    <text evidence="2 3 8">Probable UDP-L-arabinose mutase involved in the biosynthesis of cell wall non-cellulosic polysaccharides (By similarity). Was initially shown to possess an autoglycosylating activity which is dependent on the presence of UDP-glucose and manganese (Probable) (PubMed:10580281).</text>
</comment>
<comment type="catalytic activity">
    <reaction evidence="2">
        <text>UDP-beta-L-arabinofuranose = UDP-beta-L-arabinopyranose</text>
        <dbReference type="Rhea" id="RHEA:28350"/>
        <dbReference type="ChEBI" id="CHEBI:61457"/>
        <dbReference type="ChEBI" id="CHEBI:61463"/>
        <dbReference type="EC" id="5.4.99.30"/>
    </reaction>
</comment>
<comment type="cofactor">
    <cofactor evidence="2">
        <name>Mn(2+)</name>
        <dbReference type="ChEBI" id="CHEBI:29035"/>
    </cofactor>
    <cofactor evidence="2">
        <name>Mg(2+)</name>
        <dbReference type="ChEBI" id="CHEBI:18420"/>
    </cofactor>
</comment>
<comment type="subunit">
    <text evidence="5">Homopentamer or homohexamer.</text>
</comment>
<comment type="subcellular location">
    <subcellularLocation>
        <location evidence="1">Secreted</location>
        <location evidence="1">Cell wall</location>
    </subcellularLocation>
    <subcellularLocation>
        <location evidence="1">Cell junction</location>
        <location evidence="1">Plasmodesma</location>
    </subcellularLocation>
    <subcellularLocation>
        <location evidence="1">Golgi apparatus</location>
    </subcellularLocation>
    <text evidence="1">Cell wall-associated, with highest concentrations on plasmodesmata. Also located in the Golgi apparatus (By similarity).</text>
</comment>
<comment type="tissue specificity">
    <text evidence="3">Expressed in all tissues tested, including root, tuber, leaf, petiole, shoot, stolon and stem.</text>
</comment>
<comment type="domain">
    <text evidence="2">The conserved DXD motif is involved in enzyme activity.</text>
</comment>
<comment type="PTM">
    <text evidence="3 4 5">Reversibly glycosylated by UDP-glucose, UDP-xylose and UDP-galactose, but not UDP-mannose.</text>
</comment>
<comment type="similarity">
    <text evidence="7">Belongs to the RGP family.</text>
</comment>
<dbReference type="EC" id="5.4.99.30" evidence="2"/>
<dbReference type="EMBL" id="AJ223252">
    <property type="protein sequence ID" value="CAB64206.2"/>
    <property type="molecule type" value="mRNA"/>
</dbReference>
<dbReference type="SMR" id="Q9SC19"/>
<dbReference type="FunCoup" id="Q9SC19">
    <property type="interactions" value="1825"/>
</dbReference>
<dbReference type="STRING" id="4113.Q9SC19"/>
<dbReference type="CAZy" id="GT75">
    <property type="family name" value="Glycosyltransferase Family 75"/>
</dbReference>
<dbReference type="GlyCosmos" id="Q9SC19">
    <property type="glycosylation" value="1 site, No reported glycans"/>
</dbReference>
<dbReference type="PaxDb" id="4113-PGSC0003DMT400072896"/>
<dbReference type="eggNOG" id="ENOG502QSDP">
    <property type="taxonomic scope" value="Eukaryota"/>
</dbReference>
<dbReference type="InParanoid" id="Q9SC19"/>
<dbReference type="Proteomes" id="UP000011115">
    <property type="component" value="Unassembled WGS sequence"/>
</dbReference>
<dbReference type="ExpressionAtlas" id="Q9SC19">
    <property type="expression patterns" value="baseline"/>
</dbReference>
<dbReference type="GO" id="GO:0005829">
    <property type="term" value="C:cytosol"/>
    <property type="evidence" value="ECO:0000318"/>
    <property type="project" value="GO_Central"/>
</dbReference>
<dbReference type="GO" id="GO:0005576">
    <property type="term" value="C:extracellular region"/>
    <property type="evidence" value="ECO:0007669"/>
    <property type="project" value="UniProtKB-KW"/>
</dbReference>
<dbReference type="GO" id="GO:0005794">
    <property type="term" value="C:Golgi apparatus"/>
    <property type="evidence" value="ECO:0000318"/>
    <property type="project" value="GO_Central"/>
</dbReference>
<dbReference type="GO" id="GO:0009506">
    <property type="term" value="C:plasmodesma"/>
    <property type="evidence" value="ECO:0007669"/>
    <property type="project" value="UniProtKB-SubCell"/>
</dbReference>
<dbReference type="GO" id="GO:0052691">
    <property type="term" value="F:UDP-arabinopyranose mutase activity"/>
    <property type="evidence" value="ECO:0000318"/>
    <property type="project" value="GO_Central"/>
</dbReference>
<dbReference type="GO" id="GO:0071555">
    <property type="term" value="P:cell wall organization"/>
    <property type="evidence" value="ECO:0007669"/>
    <property type="project" value="UniProtKB-KW"/>
</dbReference>
<dbReference type="GO" id="GO:0030244">
    <property type="term" value="P:cellulose biosynthetic process"/>
    <property type="evidence" value="ECO:0007669"/>
    <property type="project" value="UniProtKB-KW"/>
</dbReference>
<dbReference type="GO" id="GO:0071669">
    <property type="term" value="P:plant-type cell wall organization or biogenesis"/>
    <property type="evidence" value="ECO:0000318"/>
    <property type="project" value="GO_Central"/>
</dbReference>
<dbReference type="GO" id="GO:0006486">
    <property type="term" value="P:protein glycosylation"/>
    <property type="evidence" value="ECO:0000314"/>
    <property type="project" value="UniProtKB"/>
</dbReference>
<dbReference type="GO" id="GO:0033356">
    <property type="term" value="P:UDP-L-arabinose metabolic process"/>
    <property type="evidence" value="ECO:0000318"/>
    <property type="project" value="GO_Central"/>
</dbReference>
<dbReference type="InterPro" id="IPR029044">
    <property type="entry name" value="Nucleotide-diphossugar_trans"/>
</dbReference>
<dbReference type="InterPro" id="IPR004901">
    <property type="entry name" value="RGP"/>
</dbReference>
<dbReference type="InterPro" id="IPR037595">
    <property type="entry name" value="RGP_fam"/>
</dbReference>
<dbReference type="PANTHER" id="PTHR31682:SF36">
    <property type="entry name" value="UDP-ARABINOPYRANOSE MUTASE 1-RELATED"/>
    <property type="match status" value="1"/>
</dbReference>
<dbReference type="PANTHER" id="PTHR31682">
    <property type="entry name" value="UDP-ARABINOSE MUTASE"/>
    <property type="match status" value="1"/>
</dbReference>
<dbReference type="Pfam" id="PF03214">
    <property type="entry name" value="RGP"/>
    <property type="match status" value="1"/>
</dbReference>
<dbReference type="PIRSF" id="PIRSF016429">
    <property type="entry name" value="UPTG"/>
    <property type="match status" value="1"/>
</dbReference>
<dbReference type="SUPFAM" id="SSF53448">
    <property type="entry name" value="Nucleotide-diphospho-sugar transferases"/>
    <property type="match status" value="1"/>
</dbReference>
<reference key="1">
    <citation type="journal article" date="1999" name="Plant Physiol. Biochem.">
        <title>Molecular cloning and characterization of the enzyme UDP-glucose:protein transglucosylase from potato.</title>
        <authorList>
            <person name="Bocca S.N."/>
            <person name="Kissen R."/>
            <person name="Rojas-Beltran J.A."/>
            <person name="Noel F."/>
            <person name="Gebhardt C."/>
            <person name="Moreno S."/>
            <person name="du Jardin P."/>
            <person name="Tandecarz J.S."/>
        </authorList>
    </citation>
    <scope>NUCLEOTIDE SEQUENCE [MRNA]</scope>
    <scope>PROTEIN SEQUENCE OF 95-109</scope>
    <scope>FUNCTION</scope>
    <scope>GLYCOSYLATION</scope>
    <scope>TISSUE SPECIFICITY</scope>
    <source>
        <tissue evidence="3">Stolon tip</tissue>
    </source>
</reference>
<reference key="2">
    <citation type="journal article" date="1986" name="Eur. J. Biochem.">
        <title>Alpha-glucan synthesis on a protein primer, uridine diphosphoglucose: protein transglucosylase I. Separation from starch synthetase and phosphorylase and a study of its properties.</title>
        <authorList>
            <person name="Moreno S."/>
            <person name="Cardini C.E."/>
            <person name="Tandecarz J.S."/>
        </authorList>
    </citation>
    <scope>FUNCTION</scope>
</reference>
<reference key="3">
    <citation type="journal article" date="1992" name="Plant Physiol.">
        <title>Potato tuber UDP-glucose:protein transglucosylase catalyzes its own glucosylation.</title>
        <authorList>
            <person name="Ardila F.J."/>
            <person name="Tandecarz J.S."/>
        </authorList>
    </citation>
    <scope>GLYCOSYLATION</scope>
</reference>
<reference key="4">
    <citation type="journal article" date="1997" name="Plant Physiol. Biochem.">
        <title>Initiation of starch biosynthesis: purification and characterization of UDP-glucose:protein transglucosylase from potato tubers.</title>
        <authorList>
            <person name="Bocca S.N."/>
            <person name="Rothschild A."/>
            <person name="Tandecarz J.S."/>
        </authorList>
    </citation>
    <scope>GLYCOSYLATION</scope>
    <scope>SUBUNIT</scope>
</reference>
<keyword id="KW-0965">Cell junction</keyword>
<keyword id="KW-0134">Cell wall</keyword>
<keyword id="KW-0961">Cell wall biogenesis/degradation</keyword>
<keyword id="KW-0135">Cellulose biosynthesis</keyword>
<keyword id="KW-0903">Direct protein sequencing</keyword>
<keyword id="KW-0325">Glycoprotein</keyword>
<keyword id="KW-0333">Golgi apparatus</keyword>
<keyword id="KW-0413">Isomerase</keyword>
<keyword id="KW-1185">Reference proteome</keyword>
<keyword id="KW-0964">Secreted</keyword>
<proteinExistence type="evidence at protein level"/>
<organism evidence="9">
    <name type="scientific">Solanum tuberosum</name>
    <name type="common">Potato</name>
    <dbReference type="NCBI Taxonomy" id="4113"/>
    <lineage>
        <taxon>Eukaryota</taxon>
        <taxon>Viridiplantae</taxon>
        <taxon>Streptophyta</taxon>
        <taxon>Embryophyta</taxon>
        <taxon>Tracheophyta</taxon>
        <taxon>Spermatophyta</taxon>
        <taxon>Magnoliopsida</taxon>
        <taxon>eudicotyledons</taxon>
        <taxon>Gunneridae</taxon>
        <taxon>Pentapetalae</taxon>
        <taxon>asterids</taxon>
        <taxon>lamiids</taxon>
        <taxon>Solanales</taxon>
        <taxon>Solanaceae</taxon>
        <taxon>Solanoideae</taxon>
        <taxon>Solaneae</taxon>
        <taxon>Solanum</taxon>
    </lineage>
</organism>
<gene>
    <name evidence="6" type="primary">UPTG1</name>
</gene>
<protein>
    <recommendedName>
        <fullName evidence="7">Probable UDP-arabinopyranose mutase 1</fullName>
        <ecNumber evidence="2">5.4.99.30</ecNumber>
    </recommendedName>
    <alternativeName>
        <fullName evidence="6">Reversibly glycosylated polypeptide 1</fullName>
        <shortName evidence="6">RGP1</shortName>
    </alternativeName>
    <alternativeName>
        <fullName evidence="7">UDP-L-arabinose mutase 1</fullName>
    </alternativeName>
    <alternativeName>
        <fullName evidence="6">UDP-glucose:protein transglucosylase 1</fullName>
        <shortName evidence="6">UPTG 1</shortName>
    </alternativeName>
</protein>
<accession>Q9SC19</accession>
<evidence type="ECO:0000250" key="1">
    <source>
        <dbReference type="UniProtKB" id="P80607"/>
    </source>
</evidence>
<evidence type="ECO:0000250" key="2">
    <source>
        <dbReference type="UniProtKB" id="Q8H8T0"/>
    </source>
</evidence>
<evidence type="ECO:0000269" key="3">
    <source>
    </source>
</evidence>
<evidence type="ECO:0000269" key="4">
    <source>
    </source>
</evidence>
<evidence type="ECO:0000269" key="5">
    <source ref="4"/>
</evidence>
<evidence type="ECO:0000303" key="6">
    <source>
    </source>
</evidence>
<evidence type="ECO:0000305" key="7"/>
<evidence type="ECO:0000305" key="8">
    <source>
    </source>
</evidence>
<evidence type="ECO:0000312" key="9">
    <source>
        <dbReference type="EMBL" id="CAB64206.2"/>
    </source>
</evidence>
<sequence length="365" mass="41805">MAAATPLLKDELDIVIPTIRNLDFLEMWRPFFQPYHLIIVQDGDPSKIIKVPEGFDYELYNRNDINRILGPKASCISFKDSACRCFGYMVSKKKYIYTIDDDCFVAKDPSGKDINALEQHIKNLLCPSTPHFFNTLYDPYRDGADFVRGYPFSMREGAPTAVSHGLWLNIPDYDAPTQLVKPHERNTRYVDAVMTIPKGTLFPMCGMNLAFDRDLIGPAMYFGLMGDGQPIGRYDDMWAGWCTKVICDHLGLGIKTGLPYIWHSKASNPFVNLKKEYNGIFWQEEIIPFFQAATLPKECTTVQQCYLELSKQVKKKLSSIDPYFTKLGEAMVTWIEAWDELNLLGTTWLSCLSPMVQQRLKSRCY</sequence>
<feature type="chain" id="PRO_0000221195" description="Probable UDP-arabinopyranose mutase 1">
    <location>
        <begin position="1"/>
        <end position="365"/>
    </location>
</feature>
<feature type="short sequence motif" description="DXD motif" evidence="2">
    <location>
        <begin position="100"/>
        <end position="102"/>
    </location>
</feature>
<feature type="site" description="Required for activity" evidence="2">
    <location>
        <position position="148"/>
    </location>
</feature>
<feature type="site" description="Required for activity" evidence="2">
    <location>
        <position position="155"/>
    </location>
</feature>
<feature type="glycosylation site" description="N-linked (Glc...) arginine" evidence="1">
    <location>
        <position position="148"/>
    </location>
</feature>
<name>RGP1_SOLTU</name>